<sequence length="152" mass="17667">MARMHARRRGISRSVRPYRTQAPEWSNTDKEAIIKQIVDLRRQGSSTAEIGLVMRDKYGVPSVKLATGKKITQILRDNDLASEIPEDLRNLIEKALGMRKHLAENKRDIHNKRQLMLTESKVRRLVKYYVSSKKLPKDWVYKPETAEILLSK</sequence>
<accession>Q2FS30</accession>
<dbReference type="EMBL" id="CP000254">
    <property type="protein sequence ID" value="ABD42211.1"/>
    <property type="molecule type" value="Genomic_DNA"/>
</dbReference>
<dbReference type="RefSeq" id="WP_011449469.1">
    <property type="nucleotide sequence ID" value="NC_007796.1"/>
</dbReference>
<dbReference type="SMR" id="Q2FS30"/>
<dbReference type="FunCoup" id="Q2FS30">
    <property type="interactions" value="163"/>
</dbReference>
<dbReference type="STRING" id="323259.Mhun_2511"/>
<dbReference type="EnsemblBacteria" id="ABD42211">
    <property type="protein sequence ID" value="ABD42211"/>
    <property type="gene ID" value="Mhun_2511"/>
</dbReference>
<dbReference type="GeneID" id="3924597"/>
<dbReference type="KEGG" id="mhu:Mhun_2511"/>
<dbReference type="eggNOG" id="arCOG04185">
    <property type="taxonomic scope" value="Archaea"/>
</dbReference>
<dbReference type="HOGENOM" id="CLU_090139_2_0_2"/>
<dbReference type="InParanoid" id="Q2FS30"/>
<dbReference type="OrthoDB" id="6533at2157"/>
<dbReference type="Proteomes" id="UP000001941">
    <property type="component" value="Chromosome"/>
</dbReference>
<dbReference type="GO" id="GO:0022627">
    <property type="term" value="C:cytosolic small ribosomal subunit"/>
    <property type="evidence" value="ECO:0007669"/>
    <property type="project" value="TreeGrafter"/>
</dbReference>
<dbReference type="GO" id="GO:0070181">
    <property type="term" value="F:small ribosomal subunit rRNA binding"/>
    <property type="evidence" value="ECO:0007669"/>
    <property type="project" value="TreeGrafter"/>
</dbReference>
<dbReference type="GO" id="GO:0003735">
    <property type="term" value="F:structural constituent of ribosome"/>
    <property type="evidence" value="ECO:0007669"/>
    <property type="project" value="InterPro"/>
</dbReference>
<dbReference type="GO" id="GO:0006412">
    <property type="term" value="P:translation"/>
    <property type="evidence" value="ECO:0007669"/>
    <property type="project" value="UniProtKB-UniRule"/>
</dbReference>
<dbReference type="CDD" id="cd00353">
    <property type="entry name" value="Ribosomal_S15p_S13e"/>
    <property type="match status" value="1"/>
</dbReference>
<dbReference type="FunFam" id="1.10.287.10:FF:000003">
    <property type="entry name" value="40S ribosomal protein S13"/>
    <property type="match status" value="1"/>
</dbReference>
<dbReference type="Gene3D" id="4.10.860.130">
    <property type="match status" value="1"/>
</dbReference>
<dbReference type="Gene3D" id="1.10.287.10">
    <property type="entry name" value="S15/NS1, RNA-binding"/>
    <property type="match status" value="1"/>
</dbReference>
<dbReference type="HAMAP" id="MF_01343_A">
    <property type="entry name" value="Ribosomal_uS15_A"/>
    <property type="match status" value="1"/>
</dbReference>
<dbReference type="InterPro" id="IPR000589">
    <property type="entry name" value="Ribosomal_uS15"/>
</dbReference>
<dbReference type="InterPro" id="IPR023029">
    <property type="entry name" value="Ribosomal_uS15_arc_euk"/>
</dbReference>
<dbReference type="InterPro" id="IPR012606">
    <property type="entry name" value="Ribosomal_uS15_N"/>
</dbReference>
<dbReference type="InterPro" id="IPR009068">
    <property type="entry name" value="uS15_NS1_RNA-bd_sf"/>
</dbReference>
<dbReference type="NCBIfam" id="NF006331">
    <property type="entry name" value="PRK08561.1"/>
    <property type="match status" value="1"/>
</dbReference>
<dbReference type="PANTHER" id="PTHR11885">
    <property type="entry name" value="RIBOSOMAL PROTEIN S15P/S13E"/>
    <property type="match status" value="1"/>
</dbReference>
<dbReference type="PANTHER" id="PTHR11885:SF6">
    <property type="entry name" value="SMALL RIBOSOMAL SUBUNIT PROTEIN US15"/>
    <property type="match status" value="1"/>
</dbReference>
<dbReference type="Pfam" id="PF08069">
    <property type="entry name" value="Ribosomal_S13_N"/>
    <property type="match status" value="1"/>
</dbReference>
<dbReference type="Pfam" id="PF00312">
    <property type="entry name" value="Ribosomal_S15"/>
    <property type="match status" value="1"/>
</dbReference>
<dbReference type="SMART" id="SM01386">
    <property type="entry name" value="Ribosomal_S13_N"/>
    <property type="match status" value="1"/>
</dbReference>
<dbReference type="SMART" id="SM01387">
    <property type="entry name" value="Ribosomal_S15"/>
    <property type="match status" value="1"/>
</dbReference>
<dbReference type="SUPFAM" id="SSF47060">
    <property type="entry name" value="S15/NS1 RNA-binding domain"/>
    <property type="match status" value="1"/>
</dbReference>
<dbReference type="PROSITE" id="PS00362">
    <property type="entry name" value="RIBOSOMAL_S15"/>
    <property type="match status" value="1"/>
</dbReference>
<gene>
    <name evidence="1" type="primary">rps15</name>
    <name type="ordered locus">Mhun_2511</name>
</gene>
<protein>
    <recommendedName>
        <fullName evidence="1">Small ribosomal subunit protein uS15</fullName>
    </recommendedName>
    <alternativeName>
        <fullName evidence="2">30S ribosomal protein S15</fullName>
    </alternativeName>
</protein>
<feature type="chain" id="PRO_0000255552" description="Small ribosomal subunit protein uS15">
    <location>
        <begin position="1"/>
        <end position="152"/>
    </location>
</feature>
<comment type="subunit">
    <text evidence="1">Part of the 30S ribosomal subunit.</text>
</comment>
<comment type="similarity">
    <text evidence="1">Belongs to the universal ribosomal protein uS15 family.</text>
</comment>
<name>RS15_METHJ</name>
<organism>
    <name type="scientific">Methanospirillum hungatei JF-1 (strain ATCC 27890 / DSM 864 / NBRC 100397 / JF-1)</name>
    <dbReference type="NCBI Taxonomy" id="323259"/>
    <lineage>
        <taxon>Archaea</taxon>
        <taxon>Methanobacteriati</taxon>
        <taxon>Methanobacteriota</taxon>
        <taxon>Stenosarchaea group</taxon>
        <taxon>Methanomicrobia</taxon>
        <taxon>Methanomicrobiales</taxon>
        <taxon>Methanospirillaceae</taxon>
        <taxon>Methanospirillum</taxon>
    </lineage>
</organism>
<proteinExistence type="inferred from homology"/>
<reference key="1">
    <citation type="journal article" date="2016" name="Stand. Genomic Sci.">
        <title>Complete genome sequence of Methanospirillum hungatei type strain JF1.</title>
        <authorList>
            <person name="Gunsalus R.P."/>
            <person name="Cook L.E."/>
            <person name="Crable B."/>
            <person name="Rohlin L."/>
            <person name="McDonald E."/>
            <person name="Mouttaki H."/>
            <person name="Sieber J.R."/>
            <person name="Poweleit N."/>
            <person name="Zhou H."/>
            <person name="Lapidus A.L."/>
            <person name="Daligault H.E."/>
            <person name="Land M."/>
            <person name="Gilna P."/>
            <person name="Ivanova N."/>
            <person name="Kyrpides N."/>
            <person name="Culley D.E."/>
            <person name="McInerney M.J."/>
        </authorList>
    </citation>
    <scope>NUCLEOTIDE SEQUENCE [LARGE SCALE GENOMIC DNA]</scope>
    <source>
        <strain>ATCC 27890 / DSM 864 / NBRC 100397 / JF-1</strain>
    </source>
</reference>
<keyword id="KW-1185">Reference proteome</keyword>
<keyword id="KW-0687">Ribonucleoprotein</keyword>
<keyword id="KW-0689">Ribosomal protein</keyword>
<evidence type="ECO:0000255" key="1">
    <source>
        <dbReference type="HAMAP-Rule" id="MF_01343"/>
    </source>
</evidence>
<evidence type="ECO:0000305" key="2"/>